<gene>
    <name evidence="1" type="primary">rpl32</name>
</gene>
<keyword id="KW-0150">Chloroplast</keyword>
<keyword id="KW-0934">Plastid</keyword>
<keyword id="KW-0687">Ribonucleoprotein</keyword>
<keyword id="KW-0689">Ribosomal protein</keyword>
<dbReference type="EMBL" id="AP009376">
    <property type="protein sequence ID" value="BAF50688.1"/>
    <property type="molecule type" value="Genomic_DNA"/>
</dbReference>
<dbReference type="RefSeq" id="YP_001123863.1">
    <property type="nucleotide sequence ID" value="NC_009275.1"/>
</dbReference>
<dbReference type="SMR" id="A4QLY3"/>
<dbReference type="GeneID" id="4962180"/>
<dbReference type="GO" id="GO:0009507">
    <property type="term" value="C:chloroplast"/>
    <property type="evidence" value="ECO:0007669"/>
    <property type="project" value="UniProtKB-SubCell"/>
</dbReference>
<dbReference type="GO" id="GO:0015934">
    <property type="term" value="C:large ribosomal subunit"/>
    <property type="evidence" value="ECO:0007669"/>
    <property type="project" value="InterPro"/>
</dbReference>
<dbReference type="GO" id="GO:0003735">
    <property type="term" value="F:structural constituent of ribosome"/>
    <property type="evidence" value="ECO:0007669"/>
    <property type="project" value="InterPro"/>
</dbReference>
<dbReference type="GO" id="GO:0006412">
    <property type="term" value="P:translation"/>
    <property type="evidence" value="ECO:0007669"/>
    <property type="project" value="UniProtKB-UniRule"/>
</dbReference>
<dbReference type="HAMAP" id="MF_00340">
    <property type="entry name" value="Ribosomal_bL32"/>
    <property type="match status" value="1"/>
</dbReference>
<dbReference type="InterPro" id="IPR002677">
    <property type="entry name" value="Ribosomal_bL32"/>
</dbReference>
<dbReference type="InterPro" id="IPR044958">
    <property type="entry name" value="Ribosomal_bL32_plant/cyanobact"/>
</dbReference>
<dbReference type="InterPro" id="IPR011332">
    <property type="entry name" value="Ribosomal_zn-bd"/>
</dbReference>
<dbReference type="PANTHER" id="PTHR36083">
    <property type="entry name" value="50S RIBOSOMAL PROTEIN L32, CHLOROPLASTIC"/>
    <property type="match status" value="1"/>
</dbReference>
<dbReference type="PANTHER" id="PTHR36083:SF1">
    <property type="entry name" value="LARGE RIBOSOMAL SUBUNIT PROTEIN BL32C"/>
    <property type="match status" value="1"/>
</dbReference>
<dbReference type="Pfam" id="PF01783">
    <property type="entry name" value="Ribosomal_L32p"/>
    <property type="match status" value="1"/>
</dbReference>
<dbReference type="SUPFAM" id="SSF57829">
    <property type="entry name" value="Zn-binding ribosomal proteins"/>
    <property type="match status" value="1"/>
</dbReference>
<organism>
    <name type="scientific">Nasturtium officinale</name>
    <name type="common">Watercress</name>
    <name type="synonym">Rorippa nasturtium-aquaticum</name>
    <dbReference type="NCBI Taxonomy" id="65948"/>
    <lineage>
        <taxon>Eukaryota</taxon>
        <taxon>Viridiplantae</taxon>
        <taxon>Streptophyta</taxon>
        <taxon>Embryophyta</taxon>
        <taxon>Tracheophyta</taxon>
        <taxon>Spermatophyta</taxon>
        <taxon>Magnoliopsida</taxon>
        <taxon>eudicotyledons</taxon>
        <taxon>Gunneridae</taxon>
        <taxon>Pentapetalae</taxon>
        <taxon>rosids</taxon>
        <taxon>malvids</taxon>
        <taxon>Brassicales</taxon>
        <taxon>Brassicaceae</taxon>
        <taxon>Cardamineae</taxon>
        <taxon>Nasturtium</taxon>
    </lineage>
</organism>
<geneLocation type="chloroplast"/>
<proteinExistence type="inferred from homology"/>
<reference key="1">
    <citation type="submission" date="2007-03" db="EMBL/GenBank/DDBJ databases">
        <title>Sequencing analysis of Nasturtium officinale chloroplast DNA.</title>
        <authorList>
            <person name="Hosouchi T."/>
            <person name="Tsuruoka H."/>
            <person name="Kotani H."/>
        </authorList>
    </citation>
    <scope>NUCLEOTIDE SEQUENCE [LARGE SCALE GENOMIC DNA]</scope>
</reference>
<sequence>MAVPKKRTSISKKRIRKKIWKRKGYWTSLKAFSLGKSLSTGNSKSFFVQQNK</sequence>
<comment type="subcellular location">
    <subcellularLocation>
        <location>Plastid</location>
        <location>Chloroplast</location>
    </subcellularLocation>
</comment>
<comment type="similarity">
    <text evidence="1">Belongs to the bacterial ribosomal protein bL32 family.</text>
</comment>
<accession>A4QLY3</accession>
<feature type="chain" id="PRO_0000296618" description="Large ribosomal subunit protein bL32c">
    <location>
        <begin position="1"/>
        <end position="52"/>
    </location>
</feature>
<name>RK32_NASOF</name>
<evidence type="ECO:0000255" key="1">
    <source>
        <dbReference type="HAMAP-Rule" id="MF_00340"/>
    </source>
</evidence>
<evidence type="ECO:0000305" key="2"/>
<protein>
    <recommendedName>
        <fullName evidence="1">Large ribosomal subunit protein bL32c</fullName>
    </recommendedName>
    <alternativeName>
        <fullName evidence="2">50S ribosomal protein L32, chloroplastic</fullName>
    </alternativeName>
</protein>